<comment type="function">
    <text evidence="1">One of two assembly initiator proteins, it binds directly to the 5'-end of the 23S rRNA, where it nucleates assembly of the 50S subunit.</text>
</comment>
<comment type="function">
    <text evidence="1">One of the proteins that surrounds the polypeptide exit tunnel on the outside of the subunit.</text>
</comment>
<comment type="subunit">
    <text evidence="1">Part of the 50S ribosomal subunit.</text>
</comment>
<comment type="similarity">
    <text evidence="1">Belongs to the universal ribosomal protein uL24 family.</text>
</comment>
<organism>
    <name type="scientific">Bacteroides thetaiotaomicron (strain ATCC 29148 / DSM 2079 / JCM 5827 / CCUG 10774 / NCTC 10582 / VPI-5482 / E50)</name>
    <dbReference type="NCBI Taxonomy" id="226186"/>
    <lineage>
        <taxon>Bacteria</taxon>
        <taxon>Pseudomonadati</taxon>
        <taxon>Bacteroidota</taxon>
        <taxon>Bacteroidia</taxon>
        <taxon>Bacteroidales</taxon>
        <taxon>Bacteroidaceae</taxon>
        <taxon>Bacteroides</taxon>
    </lineage>
</organism>
<accession>Q8A487</accession>
<evidence type="ECO:0000255" key="1">
    <source>
        <dbReference type="HAMAP-Rule" id="MF_01326"/>
    </source>
</evidence>
<evidence type="ECO:0000256" key="2">
    <source>
        <dbReference type="SAM" id="MobiDB-lite"/>
    </source>
</evidence>
<evidence type="ECO:0000305" key="3"/>
<name>RL24_BACTN</name>
<proteinExistence type="inferred from homology"/>
<feature type="chain" id="PRO_0000130624" description="Large ribosomal subunit protein uL24">
    <location>
        <begin position="1"/>
        <end position="105"/>
    </location>
</feature>
<feature type="region of interest" description="Disordered" evidence="2">
    <location>
        <begin position="67"/>
        <end position="105"/>
    </location>
</feature>
<reference key="1">
    <citation type="journal article" date="2003" name="Science">
        <title>A genomic view of the human-Bacteroides thetaiotaomicron symbiosis.</title>
        <authorList>
            <person name="Xu J."/>
            <person name="Bjursell M.K."/>
            <person name="Himrod J."/>
            <person name="Deng S."/>
            <person name="Carmichael L.K."/>
            <person name="Chiang H.C."/>
            <person name="Hooper L.V."/>
            <person name="Gordon J.I."/>
        </authorList>
    </citation>
    <scope>NUCLEOTIDE SEQUENCE [LARGE SCALE GENOMIC DNA]</scope>
    <source>
        <strain>ATCC 29148 / DSM 2079 / JCM 5827 / CCUG 10774 / NCTC 10582 / VPI-5482 / E50</strain>
    </source>
</reference>
<keyword id="KW-1185">Reference proteome</keyword>
<keyword id="KW-0687">Ribonucleoprotein</keyword>
<keyword id="KW-0689">Ribosomal protein</keyword>
<keyword id="KW-0694">RNA-binding</keyword>
<keyword id="KW-0699">rRNA-binding</keyword>
<gene>
    <name evidence="1" type="primary">rplX</name>
    <name type="ordered locus">BT_2716</name>
</gene>
<dbReference type="EMBL" id="AE015928">
    <property type="protein sequence ID" value="AAO77822.1"/>
    <property type="molecule type" value="Genomic_DNA"/>
</dbReference>
<dbReference type="RefSeq" id="NP_811628.1">
    <property type="nucleotide sequence ID" value="NC_004663.1"/>
</dbReference>
<dbReference type="RefSeq" id="WP_008762041.1">
    <property type="nucleotide sequence ID" value="NZ_UYXG01000001.1"/>
</dbReference>
<dbReference type="SMR" id="Q8A487"/>
<dbReference type="FunCoup" id="Q8A487">
    <property type="interactions" value="567"/>
</dbReference>
<dbReference type="STRING" id="226186.BT_2716"/>
<dbReference type="PaxDb" id="226186-BT_2716"/>
<dbReference type="EnsemblBacteria" id="AAO77822">
    <property type="protein sequence ID" value="AAO77822"/>
    <property type="gene ID" value="BT_2716"/>
</dbReference>
<dbReference type="GeneID" id="69587576"/>
<dbReference type="KEGG" id="bth:BT_2716"/>
<dbReference type="PATRIC" id="fig|226186.12.peg.2759"/>
<dbReference type="eggNOG" id="COG0198">
    <property type="taxonomic scope" value="Bacteria"/>
</dbReference>
<dbReference type="HOGENOM" id="CLU_093315_2_0_10"/>
<dbReference type="InParanoid" id="Q8A487"/>
<dbReference type="OrthoDB" id="9807419at2"/>
<dbReference type="Proteomes" id="UP000001414">
    <property type="component" value="Chromosome"/>
</dbReference>
<dbReference type="GO" id="GO:0022625">
    <property type="term" value="C:cytosolic large ribosomal subunit"/>
    <property type="evidence" value="ECO:0000318"/>
    <property type="project" value="GO_Central"/>
</dbReference>
<dbReference type="GO" id="GO:0019843">
    <property type="term" value="F:rRNA binding"/>
    <property type="evidence" value="ECO:0007669"/>
    <property type="project" value="UniProtKB-UniRule"/>
</dbReference>
<dbReference type="GO" id="GO:0003735">
    <property type="term" value="F:structural constituent of ribosome"/>
    <property type="evidence" value="ECO:0007669"/>
    <property type="project" value="InterPro"/>
</dbReference>
<dbReference type="GO" id="GO:0006412">
    <property type="term" value="P:translation"/>
    <property type="evidence" value="ECO:0000318"/>
    <property type="project" value="GO_Central"/>
</dbReference>
<dbReference type="CDD" id="cd06089">
    <property type="entry name" value="KOW_RPL26"/>
    <property type="match status" value="1"/>
</dbReference>
<dbReference type="FunFam" id="2.30.30.30:FF:000004">
    <property type="entry name" value="50S ribosomal protein L24"/>
    <property type="match status" value="1"/>
</dbReference>
<dbReference type="Gene3D" id="2.30.30.30">
    <property type="match status" value="1"/>
</dbReference>
<dbReference type="HAMAP" id="MF_01326_B">
    <property type="entry name" value="Ribosomal_uL24_B"/>
    <property type="match status" value="1"/>
</dbReference>
<dbReference type="InterPro" id="IPR005824">
    <property type="entry name" value="KOW"/>
</dbReference>
<dbReference type="InterPro" id="IPR014722">
    <property type="entry name" value="Rib_uL2_dom2"/>
</dbReference>
<dbReference type="InterPro" id="IPR003256">
    <property type="entry name" value="Ribosomal_uL24"/>
</dbReference>
<dbReference type="InterPro" id="IPR041988">
    <property type="entry name" value="Ribosomal_uL24_KOW"/>
</dbReference>
<dbReference type="InterPro" id="IPR008991">
    <property type="entry name" value="Translation_prot_SH3-like_sf"/>
</dbReference>
<dbReference type="NCBIfam" id="TIGR01079">
    <property type="entry name" value="rplX_bact"/>
    <property type="match status" value="1"/>
</dbReference>
<dbReference type="PANTHER" id="PTHR12903">
    <property type="entry name" value="MITOCHONDRIAL RIBOSOMAL PROTEIN L24"/>
    <property type="match status" value="1"/>
</dbReference>
<dbReference type="Pfam" id="PF00467">
    <property type="entry name" value="KOW"/>
    <property type="match status" value="1"/>
</dbReference>
<dbReference type="Pfam" id="PF17136">
    <property type="entry name" value="ribosomal_L24"/>
    <property type="match status" value="1"/>
</dbReference>
<dbReference type="SMART" id="SM00739">
    <property type="entry name" value="KOW"/>
    <property type="match status" value="1"/>
</dbReference>
<dbReference type="SUPFAM" id="SSF50104">
    <property type="entry name" value="Translation proteins SH3-like domain"/>
    <property type="match status" value="1"/>
</dbReference>
<sequence length="105" mass="11340">MSKLHIKKGDTVYVNAGEDKGKTGRVLKVLVKEGRAIVEGINMVSKSTKPNAKNPQGGIVKQEASIHISNLNPVDPKTGKATRIGRRKSSEGTLVRYSKKSGEEI</sequence>
<protein>
    <recommendedName>
        <fullName evidence="1">Large ribosomal subunit protein uL24</fullName>
    </recommendedName>
    <alternativeName>
        <fullName evidence="3">50S ribosomal protein L24</fullName>
    </alternativeName>
</protein>